<accession>Q5R615</accession>
<dbReference type="EC" id="3.6.5.2" evidence="3"/>
<dbReference type="EMBL" id="CR860685">
    <property type="protein sequence ID" value="CAH92801.1"/>
    <property type="molecule type" value="mRNA"/>
</dbReference>
<dbReference type="RefSeq" id="NP_001126634.1">
    <property type="nucleotide sequence ID" value="NM_001133162.1"/>
</dbReference>
<dbReference type="SMR" id="Q5R615"/>
<dbReference type="FunCoup" id="Q5R615">
    <property type="interactions" value="2096"/>
</dbReference>
<dbReference type="STRING" id="9601.ENSPPYP00000016838"/>
<dbReference type="Ensembl" id="ENSPPYT00000037899.1">
    <property type="protein sequence ID" value="ENSPPYP00000043708.1"/>
    <property type="gene ID" value="ENSPPYG00000015072.2"/>
</dbReference>
<dbReference type="GeneID" id="100173632"/>
<dbReference type="KEGG" id="pon:100173632"/>
<dbReference type="CTD" id="83452"/>
<dbReference type="eggNOG" id="KOG0084">
    <property type="taxonomic scope" value="Eukaryota"/>
</dbReference>
<dbReference type="GeneTree" id="ENSGT00940000157090"/>
<dbReference type="HOGENOM" id="CLU_041217_10_3_1"/>
<dbReference type="InParanoid" id="Q5R615"/>
<dbReference type="OrthoDB" id="10006973at2759"/>
<dbReference type="TreeFam" id="TF300097"/>
<dbReference type="Proteomes" id="UP000001595">
    <property type="component" value="Chromosome 4"/>
</dbReference>
<dbReference type="GO" id="GO:0005796">
    <property type="term" value="C:Golgi lumen"/>
    <property type="evidence" value="ECO:0000250"/>
    <property type="project" value="UniProtKB"/>
</dbReference>
<dbReference type="GO" id="GO:0000139">
    <property type="term" value="C:Golgi membrane"/>
    <property type="evidence" value="ECO:0000250"/>
    <property type="project" value="UniProtKB"/>
</dbReference>
<dbReference type="GO" id="GO:0034045">
    <property type="term" value="C:phagophore assembly site membrane"/>
    <property type="evidence" value="ECO:0000250"/>
    <property type="project" value="UniProtKB"/>
</dbReference>
<dbReference type="GO" id="GO:0003925">
    <property type="term" value="F:G protein activity"/>
    <property type="evidence" value="ECO:0000250"/>
    <property type="project" value="UniProtKB"/>
</dbReference>
<dbReference type="GO" id="GO:0005525">
    <property type="term" value="F:GTP binding"/>
    <property type="evidence" value="ECO:0007669"/>
    <property type="project" value="UniProtKB-KW"/>
</dbReference>
<dbReference type="GO" id="GO:0000045">
    <property type="term" value="P:autophagosome assembly"/>
    <property type="evidence" value="ECO:0000250"/>
    <property type="project" value="UniProtKB"/>
</dbReference>
<dbReference type="GO" id="GO:0034497">
    <property type="term" value="P:protein localization to phagophore assembly site"/>
    <property type="evidence" value="ECO:0000250"/>
    <property type="project" value="UniProtKB"/>
</dbReference>
<dbReference type="GO" id="GO:0015031">
    <property type="term" value="P:protein transport"/>
    <property type="evidence" value="ECO:0007669"/>
    <property type="project" value="UniProtKB-KW"/>
</dbReference>
<dbReference type="GO" id="GO:0032482">
    <property type="term" value="P:Rab protein signal transduction"/>
    <property type="evidence" value="ECO:0007669"/>
    <property type="project" value="InterPro"/>
</dbReference>
<dbReference type="GO" id="GO:2000156">
    <property type="term" value="P:regulation of retrograde vesicle-mediated transport, Golgi to ER"/>
    <property type="evidence" value="ECO:0000250"/>
    <property type="project" value="UniProtKB"/>
</dbReference>
<dbReference type="CDD" id="cd04115">
    <property type="entry name" value="Rab33B_Rab33A"/>
    <property type="match status" value="1"/>
</dbReference>
<dbReference type="FunFam" id="3.40.50.300:FF:000516">
    <property type="entry name" value="RAB33B, member RAS oncogene family"/>
    <property type="match status" value="1"/>
</dbReference>
<dbReference type="Gene3D" id="3.40.50.300">
    <property type="entry name" value="P-loop containing nucleotide triphosphate hydrolases"/>
    <property type="match status" value="1"/>
</dbReference>
<dbReference type="InterPro" id="IPR027417">
    <property type="entry name" value="P-loop_NTPase"/>
</dbReference>
<dbReference type="InterPro" id="IPR041822">
    <property type="entry name" value="Rab33A/B"/>
</dbReference>
<dbReference type="InterPro" id="IPR005225">
    <property type="entry name" value="Small_GTP-bd"/>
</dbReference>
<dbReference type="InterPro" id="IPR001806">
    <property type="entry name" value="Small_GTPase"/>
</dbReference>
<dbReference type="NCBIfam" id="TIGR00231">
    <property type="entry name" value="small_GTP"/>
    <property type="match status" value="1"/>
</dbReference>
<dbReference type="PANTHER" id="PTHR47978">
    <property type="match status" value="1"/>
</dbReference>
<dbReference type="Pfam" id="PF00071">
    <property type="entry name" value="Ras"/>
    <property type="match status" value="1"/>
</dbReference>
<dbReference type="PRINTS" id="PR00449">
    <property type="entry name" value="RASTRNSFRMNG"/>
</dbReference>
<dbReference type="SMART" id="SM00175">
    <property type="entry name" value="RAB"/>
    <property type="match status" value="1"/>
</dbReference>
<dbReference type="SMART" id="SM00176">
    <property type="entry name" value="RAN"/>
    <property type="match status" value="1"/>
</dbReference>
<dbReference type="SMART" id="SM00173">
    <property type="entry name" value="RAS"/>
    <property type="match status" value="1"/>
</dbReference>
<dbReference type="SMART" id="SM00174">
    <property type="entry name" value="RHO"/>
    <property type="match status" value="1"/>
</dbReference>
<dbReference type="SUPFAM" id="SSF52540">
    <property type="entry name" value="P-loop containing nucleoside triphosphate hydrolases"/>
    <property type="match status" value="1"/>
</dbReference>
<dbReference type="PROSITE" id="PS51419">
    <property type="entry name" value="RAB"/>
    <property type="match status" value="1"/>
</dbReference>
<comment type="function">
    <text evidence="3">The small GTPases Rab are key regulators of intracellular membrane trafficking, from the formation of transport vesicles to their fusion with membranes. Rabs cycle between an inactive GDP-bound form and an active GTP-bound form that is able to recruit to membranes different sets of downstream effectors directly responsible for vesicle formation, movement, tethering and fusion. RAB33B acts, in coordination with RAB6A, to regulate intra-Golgi retrograde trafficking. Participates in autophagosome formation by recruiting the ATG12-ATG5-ATG16L1 complex to phagophores, probably in a nucleotide-independent manner.</text>
</comment>
<comment type="catalytic activity">
    <reaction evidence="3">
        <text>GTP + H2O = GDP + phosphate + H(+)</text>
        <dbReference type="Rhea" id="RHEA:19669"/>
        <dbReference type="ChEBI" id="CHEBI:15377"/>
        <dbReference type="ChEBI" id="CHEBI:15378"/>
        <dbReference type="ChEBI" id="CHEBI:37565"/>
        <dbReference type="ChEBI" id="CHEBI:43474"/>
        <dbReference type="ChEBI" id="CHEBI:58189"/>
        <dbReference type="EC" id="3.6.5.2"/>
    </reaction>
    <physiologicalReaction direction="left-to-right" evidence="3">
        <dbReference type="Rhea" id="RHEA:19670"/>
    </physiologicalReaction>
</comment>
<comment type="cofactor">
    <cofactor evidence="3">
        <name>Mg(2+)</name>
        <dbReference type="ChEBI" id="CHEBI:18420"/>
    </cofactor>
</comment>
<comment type="activity regulation">
    <text evidence="3">Regulated by guanine nucleotide exchange factors (GEFs) which promote the exchange of bound GDP for free GTP. Regulated by GTPase activating proteins (GAPs) such as SGSM2 which increase the GTP hydrolysis activity. Inhibited by GDP dissociation inhibitors (GDIs).</text>
</comment>
<comment type="subunit">
    <text evidence="2 3">Interacts (GTP- and GDP-bound forms) with ATG16L1; the complex consists of a tetramer where two RAB33B molecules bind independently one molecule of the ATG16L1 homodimer; the interaction promotes ATG12-ATG5-ATG16L1 complex recruitment to phagophores (By similarity). Interacts with ATG16L2; however interaction is approximately hundred times lower than for ATG16L1 (By similarity). Interacts with RIC1 (via C-terminus domain); the interaction is direct with a preference for RAB33B-GTP. Interacts with RGP1 (By similarity).</text>
</comment>
<comment type="subcellular location">
    <subcellularLocation>
        <location evidence="3">Golgi apparatus membrane</location>
        <topology evidence="3">Lipid-anchor</topology>
    </subcellularLocation>
    <subcellularLocation>
        <location evidence="3">Golgi apparatus</location>
        <location evidence="3">cis-Golgi network</location>
    </subcellularLocation>
    <subcellularLocation>
        <location evidence="3">Preautophagosomal structure membrane</location>
    </subcellularLocation>
    <text evidence="2 3">Under starvation conditions punctate RAB33B-positive structures are often observed in the cytoplasm. Under starved conditions RAB33B translocates from the Golgi to phagophores; this translocation is driven by interaction with ATG16L1.</text>
</comment>
<comment type="domain">
    <text evidence="3">Switch 1, switch 2 and the interswitch regions are characteristic of Rab GTPases and mediate the interactions with Rab downstream effectors. The switch regions undergo conformational changes upon nucleotide binding which drive interaction with specific sets of effector proteins. Although most effectors only bind GTP-bound Rab, ATG16L1 effector binds both GTP- and GDP-bound RAB33B.</text>
</comment>
<comment type="PTM">
    <text evidence="3">Prenylated.</text>
</comment>
<comment type="similarity">
    <text evidence="4">Belongs to the small GTPase superfamily. Rab family.</text>
</comment>
<proteinExistence type="evidence at transcript level"/>
<gene>
    <name type="primary">RAB33B</name>
</gene>
<reference key="1">
    <citation type="submission" date="2004-11" db="EMBL/GenBank/DDBJ databases">
        <authorList>
            <consortium name="The German cDNA consortium"/>
        </authorList>
    </citation>
    <scope>NUCLEOTIDE SEQUENCE [LARGE SCALE MRNA]</scope>
    <source>
        <tissue>Brain cortex</tissue>
    </source>
</reference>
<organism>
    <name type="scientific">Pongo abelii</name>
    <name type="common">Sumatran orangutan</name>
    <name type="synonym">Pongo pygmaeus abelii</name>
    <dbReference type="NCBI Taxonomy" id="9601"/>
    <lineage>
        <taxon>Eukaryota</taxon>
        <taxon>Metazoa</taxon>
        <taxon>Chordata</taxon>
        <taxon>Craniata</taxon>
        <taxon>Vertebrata</taxon>
        <taxon>Euteleostomi</taxon>
        <taxon>Mammalia</taxon>
        <taxon>Eutheria</taxon>
        <taxon>Euarchontoglires</taxon>
        <taxon>Primates</taxon>
        <taxon>Haplorrhini</taxon>
        <taxon>Catarrhini</taxon>
        <taxon>Hominidae</taxon>
        <taxon>Pongo</taxon>
    </lineage>
</organism>
<keyword id="KW-0072">Autophagy</keyword>
<keyword id="KW-0333">Golgi apparatus</keyword>
<keyword id="KW-0342">GTP-binding</keyword>
<keyword id="KW-0378">Hydrolase</keyword>
<keyword id="KW-0449">Lipoprotein</keyword>
<keyword id="KW-0460">Magnesium</keyword>
<keyword id="KW-0472">Membrane</keyword>
<keyword id="KW-0479">Metal-binding</keyword>
<keyword id="KW-0488">Methylation</keyword>
<keyword id="KW-0547">Nucleotide-binding</keyword>
<keyword id="KW-0636">Prenylation</keyword>
<keyword id="KW-0653">Protein transport</keyword>
<keyword id="KW-1185">Reference proteome</keyword>
<keyword id="KW-0813">Transport</keyword>
<protein>
    <recommendedName>
        <fullName>Ras-related protein Rab-33B</fullName>
        <ecNumber evidence="3">3.6.5.2</ecNumber>
    </recommendedName>
</protein>
<evidence type="ECO:0000250" key="1"/>
<evidence type="ECO:0000250" key="2">
    <source>
        <dbReference type="UniProtKB" id="O35963"/>
    </source>
</evidence>
<evidence type="ECO:0000250" key="3">
    <source>
        <dbReference type="UniProtKB" id="Q9H082"/>
    </source>
</evidence>
<evidence type="ECO:0000305" key="4"/>
<name>RB33B_PONAB</name>
<sequence>MAEEMESSLEASFSSSGAVSGASGFLPPARSRIFKIIVIGDSNVGKTCLTYRFCAGRFPDRTEATIGVDFRERAVEIDGERIKIQLWDTAGQERFRKSMVQHYYRNVHAVVFVYDMTNMASFHSLPSWIEECKQHLLASDIPRILVGNKCDLRSAIQVPTDLAQKFADTHSMPLFETSAKNPNDNDHVEAIFMTLAHKLKSHKPLMLSQPPDNGIILKPEPKPAMTCWC</sequence>
<feature type="chain" id="PRO_0000261125" description="Ras-related protein Rab-33B">
    <location>
        <begin position="1"/>
        <end position="229"/>
    </location>
</feature>
<feature type="short sequence motif" description="Switch 1" evidence="3">
    <location>
        <begin position="56"/>
        <end position="68"/>
    </location>
</feature>
<feature type="short sequence motif" description="Switch 2" evidence="3">
    <location>
        <begin position="89"/>
        <end position="108"/>
    </location>
</feature>
<feature type="binding site" evidence="3">
    <location>
        <position position="43"/>
    </location>
    <ligand>
        <name>GTP</name>
        <dbReference type="ChEBI" id="CHEBI:37565"/>
    </ligand>
</feature>
<feature type="binding site" evidence="3">
    <location>
        <position position="44"/>
    </location>
    <ligand>
        <name>GTP</name>
        <dbReference type="ChEBI" id="CHEBI:37565"/>
    </ligand>
</feature>
<feature type="binding site" evidence="3">
    <location>
        <position position="45"/>
    </location>
    <ligand>
        <name>GTP</name>
        <dbReference type="ChEBI" id="CHEBI:37565"/>
    </ligand>
</feature>
<feature type="binding site" evidence="3">
    <location>
        <position position="46"/>
    </location>
    <ligand>
        <name>GTP</name>
        <dbReference type="ChEBI" id="CHEBI:37565"/>
    </ligand>
</feature>
<feature type="binding site" evidence="3">
    <location>
        <position position="47"/>
    </location>
    <ligand>
        <name>GTP</name>
        <dbReference type="ChEBI" id="CHEBI:37565"/>
    </ligand>
</feature>
<feature type="binding site" evidence="3">
    <location>
        <position position="47"/>
    </location>
    <ligand>
        <name>Mg(2+)</name>
        <dbReference type="ChEBI" id="CHEBI:18420"/>
    </ligand>
</feature>
<feature type="binding site" evidence="3">
    <location>
        <position position="48"/>
    </location>
    <ligand>
        <name>GTP</name>
        <dbReference type="ChEBI" id="CHEBI:37565"/>
    </ligand>
</feature>
<feature type="binding site" evidence="3">
    <location>
        <position position="62"/>
    </location>
    <ligand>
        <name>GTP</name>
        <dbReference type="ChEBI" id="CHEBI:37565"/>
    </ligand>
</feature>
<feature type="binding site" evidence="3">
    <location>
        <position position="65"/>
    </location>
    <ligand>
        <name>GTP</name>
        <dbReference type="ChEBI" id="CHEBI:37565"/>
    </ligand>
</feature>
<feature type="binding site" evidence="3">
    <location>
        <position position="65"/>
    </location>
    <ligand>
        <name>Mg(2+)</name>
        <dbReference type="ChEBI" id="CHEBI:18420"/>
    </ligand>
</feature>
<feature type="binding site" evidence="3">
    <location>
        <position position="88"/>
    </location>
    <ligand>
        <name>Mg(2+)</name>
        <dbReference type="ChEBI" id="CHEBI:18420"/>
    </ligand>
</feature>
<feature type="binding site" evidence="3">
    <location>
        <position position="91"/>
    </location>
    <ligand>
        <name>GTP</name>
        <dbReference type="ChEBI" id="CHEBI:37565"/>
    </ligand>
</feature>
<feature type="binding site" evidence="3">
    <location>
        <position position="148"/>
    </location>
    <ligand>
        <name>GTP</name>
        <dbReference type="ChEBI" id="CHEBI:37565"/>
    </ligand>
</feature>
<feature type="binding site" evidence="3">
    <location>
        <position position="149"/>
    </location>
    <ligand>
        <name>GTP</name>
        <dbReference type="ChEBI" id="CHEBI:37565"/>
    </ligand>
</feature>
<feature type="binding site" evidence="3">
    <location>
        <position position="151"/>
    </location>
    <ligand>
        <name>GTP</name>
        <dbReference type="ChEBI" id="CHEBI:37565"/>
    </ligand>
</feature>
<feature type="binding site" evidence="3">
    <location>
        <position position="179"/>
    </location>
    <ligand>
        <name>GTP</name>
        <dbReference type="ChEBI" id="CHEBI:37565"/>
    </ligand>
</feature>
<feature type="binding site" evidence="3">
    <location>
        <position position="180"/>
    </location>
    <ligand>
        <name>GTP</name>
        <dbReference type="ChEBI" id="CHEBI:37565"/>
    </ligand>
</feature>
<feature type="modified residue" description="Cysteine methyl ester" evidence="1">
    <location>
        <position position="229"/>
    </location>
</feature>
<feature type="lipid moiety-binding region" description="S-geranylgeranyl cysteine" evidence="1">
    <location>
        <position position="227"/>
    </location>
</feature>
<feature type="lipid moiety-binding region" description="S-geranylgeranyl cysteine" evidence="1">
    <location>
        <position position="229"/>
    </location>
</feature>